<gene>
    <name type="primary">PPE47/ppe48</name>
    <name type="ordered locus">MT3106</name>
</gene>
<name>PPE47_MYCTO</name>
<organism>
    <name type="scientific">Mycobacterium tuberculosis (strain CDC 1551 / Oshkosh)</name>
    <dbReference type="NCBI Taxonomy" id="83331"/>
    <lineage>
        <taxon>Bacteria</taxon>
        <taxon>Bacillati</taxon>
        <taxon>Actinomycetota</taxon>
        <taxon>Actinomycetes</taxon>
        <taxon>Mycobacteriales</taxon>
        <taxon>Mycobacteriaceae</taxon>
        <taxon>Mycobacterium</taxon>
        <taxon>Mycobacterium tuberculosis complex</taxon>
    </lineage>
</organism>
<reference key="1">
    <citation type="journal article" date="2002" name="J. Bacteriol.">
        <title>Whole-genome comparison of Mycobacterium tuberculosis clinical and laboratory strains.</title>
        <authorList>
            <person name="Fleischmann R.D."/>
            <person name="Alland D."/>
            <person name="Eisen J.A."/>
            <person name="Carpenter L."/>
            <person name="White O."/>
            <person name="Peterson J.D."/>
            <person name="DeBoy R.T."/>
            <person name="Dodson R.J."/>
            <person name="Gwinn M.L."/>
            <person name="Haft D.H."/>
            <person name="Hickey E.K."/>
            <person name="Kolonay J.F."/>
            <person name="Nelson W.C."/>
            <person name="Umayam L.A."/>
            <person name="Ermolaeva M.D."/>
            <person name="Salzberg S.L."/>
            <person name="Delcher A."/>
            <person name="Utterback T.R."/>
            <person name="Weidman J.F."/>
            <person name="Khouri H.M."/>
            <person name="Gill J."/>
            <person name="Mikula A."/>
            <person name="Bishai W."/>
            <person name="Jacobs W.R. Jr."/>
            <person name="Venter J.C."/>
            <person name="Fraser C.M."/>
        </authorList>
    </citation>
    <scope>NUCLEOTIDE SEQUENCE [LARGE SCALE GENOMIC DNA]</scope>
    <source>
        <strain>CDC 1551 / Oshkosh</strain>
    </source>
</reference>
<keyword id="KW-1185">Reference proteome</keyword>
<protein>
    <recommendedName>
        <fullName>Uncharacterized PPE family protein PPE47/PPE48</fullName>
    </recommendedName>
</protein>
<comment type="similarity">
    <text evidence="1">Belongs to the mycobacterial PPE family.</text>
</comment>
<accession>P9WHY6</accession>
<accession>L0TE35</accession>
<accession>O53268</accession>
<accession>O53269</accession>
<proteinExistence type="inferred from homology"/>
<evidence type="ECO:0000305" key="1"/>
<dbReference type="EMBL" id="AE000516">
    <property type="protein sequence ID" value="AAK47435.1"/>
    <property type="molecule type" value="Genomic_DNA"/>
</dbReference>
<dbReference type="RefSeq" id="WP_003910692.1">
    <property type="nucleotide sequence ID" value="NZ_KK341227.1"/>
</dbReference>
<dbReference type="SMR" id="P9WHY6"/>
<dbReference type="KEGG" id="mtc:MT3106"/>
<dbReference type="PATRIC" id="fig|83331.31.peg.3347"/>
<dbReference type="HOGENOM" id="CLU_000243_5_0_11"/>
<dbReference type="Proteomes" id="UP000001020">
    <property type="component" value="Chromosome"/>
</dbReference>
<dbReference type="GO" id="GO:0052572">
    <property type="term" value="P:response to host immune response"/>
    <property type="evidence" value="ECO:0007669"/>
    <property type="project" value="TreeGrafter"/>
</dbReference>
<dbReference type="FunFam" id="1.20.1260.20:FF:000001">
    <property type="entry name" value="PPE family protein PPE41"/>
    <property type="match status" value="1"/>
</dbReference>
<dbReference type="Gene3D" id="1.20.1260.20">
    <property type="entry name" value="PPE superfamily"/>
    <property type="match status" value="1"/>
</dbReference>
<dbReference type="InterPro" id="IPR043641">
    <property type="entry name" value="PPE-PPW_C"/>
</dbReference>
<dbReference type="InterPro" id="IPR000030">
    <property type="entry name" value="PPE_dom"/>
</dbReference>
<dbReference type="InterPro" id="IPR038332">
    <property type="entry name" value="PPE_sf"/>
</dbReference>
<dbReference type="PANTHER" id="PTHR46766">
    <property type="entry name" value="GLUTAMINE-RICH PROTEIN 2"/>
    <property type="match status" value="1"/>
</dbReference>
<dbReference type="PANTHER" id="PTHR46766:SF1">
    <property type="entry name" value="GLUTAMINE-RICH PROTEIN 2"/>
    <property type="match status" value="1"/>
</dbReference>
<dbReference type="Pfam" id="PF00823">
    <property type="entry name" value="PPE"/>
    <property type="match status" value="1"/>
</dbReference>
<dbReference type="Pfam" id="PF18878">
    <property type="entry name" value="PPE-PPW"/>
    <property type="match status" value="1"/>
</dbReference>
<dbReference type="SUPFAM" id="SSF140459">
    <property type="entry name" value="PE/PPE dimer-like"/>
    <property type="match status" value="1"/>
</dbReference>
<sequence>MTAPVWLASPPEVHSALLSAGPGPGSLQAAAAGWSALSAEYAAVAQELSVVVAAVGAGVWQGPSAELFVAAYVPYVAWLVQASADSAAAAGEHEAAAAGYVCALAEMPTLPELAANHLTHAVLVATNFFGINTIPIALNEADYVRMWVQAATVMSAYEAVVGAALVATPHTGPAPVIVKPGANEASNAVAAATITPFPFGELAKFLEMAAQAFTEVGELIMKSAEAWAVGFVELITGLVNFEPWLVLTGMIDMFFATVGFALGVFVLVPLLEFAVVLELAILSIGWIISNIFGAIPVLAGPLLGALAAAVVPGVAGVTGLAGLAAVPAVGAAAGAPAALVGSVAPVSGGVVSPQARLVSAVEPAPASTSVSVLASDRGAGALGFVGTAGKESVGQPAGLTVLADEFGDGAPVPMLPGSWGPDLVGVAGDGGLVSV</sequence>
<feature type="chain" id="PRO_0000428100" description="Uncharacterized PPE family protein PPE47/PPE48">
    <location>
        <begin position="1"/>
        <end position="435"/>
    </location>
</feature>